<organism>
    <name type="scientific">Staphylococcus aureus (strain JH9)</name>
    <dbReference type="NCBI Taxonomy" id="359786"/>
    <lineage>
        <taxon>Bacteria</taxon>
        <taxon>Bacillati</taxon>
        <taxon>Bacillota</taxon>
        <taxon>Bacilli</taxon>
        <taxon>Bacillales</taxon>
        <taxon>Staphylococcaceae</taxon>
        <taxon>Staphylococcus</taxon>
    </lineage>
</organism>
<gene>
    <name evidence="1" type="primary">mnmG</name>
    <name evidence="1" type="synonym">gidA</name>
    <name type="ordered locus">SaurJH9_2733</name>
</gene>
<keyword id="KW-0963">Cytoplasm</keyword>
<keyword id="KW-0274">FAD</keyword>
<keyword id="KW-0285">Flavoprotein</keyword>
<keyword id="KW-0520">NAD</keyword>
<keyword id="KW-0819">tRNA processing</keyword>
<reference key="1">
    <citation type="submission" date="2007-05" db="EMBL/GenBank/DDBJ databases">
        <title>Complete sequence of chromosome of Staphylococcus aureus subsp. aureus JH9.</title>
        <authorList>
            <consortium name="US DOE Joint Genome Institute"/>
            <person name="Copeland A."/>
            <person name="Lucas S."/>
            <person name="Lapidus A."/>
            <person name="Barry K."/>
            <person name="Detter J.C."/>
            <person name="Glavina del Rio T."/>
            <person name="Hammon N."/>
            <person name="Israni S."/>
            <person name="Pitluck S."/>
            <person name="Chain P."/>
            <person name="Malfatti S."/>
            <person name="Shin M."/>
            <person name="Vergez L."/>
            <person name="Schmutz J."/>
            <person name="Larimer F."/>
            <person name="Land M."/>
            <person name="Hauser L."/>
            <person name="Kyrpides N."/>
            <person name="Kim E."/>
            <person name="Tomasz A."/>
            <person name="Richardson P."/>
        </authorList>
    </citation>
    <scope>NUCLEOTIDE SEQUENCE [LARGE SCALE GENOMIC DNA]</scope>
    <source>
        <strain>JH9</strain>
    </source>
</reference>
<comment type="function">
    <text evidence="1">NAD-binding protein involved in the addition of a carboxymethylaminomethyl (cmnm) group at the wobble position (U34) of certain tRNAs, forming tRNA-cmnm(5)s(2)U34.</text>
</comment>
<comment type="cofactor">
    <cofactor evidence="1">
        <name>FAD</name>
        <dbReference type="ChEBI" id="CHEBI:57692"/>
    </cofactor>
</comment>
<comment type="subunit">
    <text evidence="1">Homodimer. Heterotetramer of two MnmE and two MnmG subunits.</text>
</comment>
<comment type="subcellular location">
    <subcellularLocation>
        <location evidence="1">Cytoplasm</location>
    </subcellularLocation>
</comment>
<comment type="similarity">
    <text evidence="1">Belongs to the MnmG family.</text>
</comment>
<proteinExistence type="inferred from homology"/>
<name>MNMG_STAA9</name>
<feature type="chain" id="PRO_1000076335" description="tRNA uridine 5-carboxymethylaminomethyl modification enzyme MnmG">
    <location>
        <begin position="1"/>
        <end position="625"/>
    </location>
</feature>
<feature type="binding site" evidence="1">
    <location>
        <begin position="11"/>
        <end position="16"/>
    </location>
    <ligand>
        <name>FAD</name>
        <dbReference type="ChEBI" id="CHEBI:57692"/>
    </ligand>
</feature>
<feature type="binding site" evidence="1">
    <location>
        <position position="123"/>
    </location>
    <ligand>
        <name>FAD</name>
        <dbReference type="ChEBI" id="CHEBI:57692"/>
    </ligand>
</feature>
<feature type="binding site" evidence="1">
    <location>
        <position position="178"/>
    </location>
    <ligand>
        <name>FAD</name>
        <dbReference type="ChEBI" id="CHEBI:57692"/>
    </ligand>
</feature>
<feature type="binding site" evidence="1">
    <location>
        <begin position="270"/>
        <end position="284"/>
    </location>
    <ligand>
        <name>NAD(+)</name>
        <dbReference type="ChEBI" id="CHEBI:57540"/>
    </ligand>
</feature>
<feature type="binding site" evidence="1">
    <location>
        <position position="367"/>
    </location>
    <ligand>
        <name>FAD</name>
        <dbReference type="ChEBI" id="CHEBI:57692"/>
    </ligand>
</feature>
<accession>A5IWD6</accession>
<protein>
    <recommendedName>
        <fullName evidence="1">tRNA uridine 5-carboxymethylaminomethyl modification enzyme MnmG</fullName>
    </recommendedName>
    <alternativeName>
        <fullName evidence="1">Glucose-inhibited division protein A</fullName>
    </alternativeName>
</protein>
<evidence type="ECO:0000255" key="1">
    <source>
        <dbReference type="HAMAP-Rule" id="MF_00129"/>
    </source>
</evidence>
<sequence>MVQEYDVIVIGAGHAGVEAGLASARRGAKTLMLTINLDNIAFMPCNPSVGGPAKGIVVREIDALGGQMAKTIDKTHIQMRMLNTGKGPAVRALRAQADKVLYQQEMKRVIEDEENLHIMQGMVDELIIEDNEVKGVRTNIGTEYLSKAVIITTGTFLRGEIILGNMKYSSGPNHQLPSITLSDNLRELGFDIVRFKTGTPPRVNSKTIDYSKTEIQPGDDVGRAFSFETTEYILDQLPCWLTYTNAETHKVIDDNLHLSAMYSGMIKGTGPRYCPSIEDKFVRFNDKPRHQLFLEPEGRNTNEVYVQGLSTSLPEHVQRQMLETIPGLEKADMMRAGYAIEYDAIVPTQLWPTLETKMIKNLYTAGQINGTSGYEEAAGQGLMAGINAAGKVLNTGEKILSRSDAYIGVLIDDLVTKGTNEPYRLLTSRAEYRLLLRHDNADLRLTDMGYELGMISEERYARFNEKRQQIDAEIKRLSDIRIKPNEHTQAIIEQHGGSRLKDGILAIDLLRRPEMTYDIILEILEEEHQLNADVEEQVEIQTKYEGYINKSLQQVEKVKRMEEKKIPEDLDYSKIDSLATEAREKLSEVKPLNIAQASRISGVNPADISILLIYLEQGKLQRVSD</sequence>
<dbReference type="EMBL" id="CP000703">
    <property type="protein sequence ID" value="ABQ50509.1"/>
    <property type="molecule type" value="Genomic_DNA"/>
</dbReference>
<dbReference type="RefSeq" id="WP_000249657.1">
    <property type="nucleotide sequence ID" value="NC_009487.1"/>
</dbReference>
<dbReference type="SMR" id="A5IWD6"/>
<dbReference type="KEGG" id="saj:SaurJH9_2733"/>
<dbReference type="HOGENOM" id="CLU_007831_2_2_9"/>
<dbReference type="GO" id="GO:0005829">
    <property type="term" value="C:cytosol"/>
    <property type="evidence" value="ECO:0007669"/>
    <property type="project" value="TreeGrafter"/>
</dbReference>
<dbReference type="GO" id="GO:0050660">
    <property type="term" value="F:flavin adenine dinucleotide binding"/>
    <property type="evidence" value="ECO:0007669"/>
    <property type="project" value="UniProtKB-UniRule"/>
</dbReference>
<dbReference type="GO" id="GO:0030488">
    <property type="term" value="P:tRNA methylation"/>
    <property type="evidence" value="ECO:0007669"/>
    <property type="project" value="TreeGrafter"/>
</dbReference>
<dbReference type="GO" id="GO:0002098">
    <property type="term" value="P:tRNA wobble uridine modification"/>
    <property type="evidence" value="ECO:0007669"/>
    <property type="project" value="InterPro"/>
</dbReference>
<dbReference type="FunFam" id="1.10.10.1800:FF:000001">
    <property type="entry name" value="tRNA uridine 5-carboxymethylaminomethyl modification enzyme MnmG"/>
    <property type="match status" value="1"/>
</dbReference>
<dbReference type="FunFam" id="1.10.150.570:FF:000001">
    <property type="entry name" value="tRNA uridine 5-carboxymethylaminomethyl modification enzyme MnmG"/>
    <property type="match status" value="1"/>
</dbReference>
<dbReference type="FunFam" id="3.50.50.60:FF:000002">
    <property type="entry name" value="tRNA uridine 5-carboxymethylaminomethyl modification enzyme MnmG"/>
    <property type="match status" value="1"/>
</dbReference>
<dbReference type="FunFam" id="3.50.50.60:FF:000063">
    <property type="entry name" value="tRNA uridine 5-carboxymethylaminomethyl modification enzyme MnmG"/>
    <property type="match status" value="1"/>
</dbReference>
<dbReference type="Gene3D" id="3.50.50.60">
    <property type="entry name" value="FAD/NAD(P)-binding domain"/>
    <property type="match status" value="2"/>
</dbReference>
<dbReference type="Gene3D" id="1.10.150.570">
    <property type="entry name" value="GidA associated domain, C-terminal subdomain"/>
    <property type="match status" value="1"/>
</dbReference>
<dbReference type="Gene3D" id="1.10.10.1800">
    <property type="entry name" value="tRNA uridine 5-carboxymethylaminomethyl modification enzyme MnmG/GidA"/>
    <property type="match status" value="1"/>
</dbReference>
<dbReference type="HAMAP" id="MF_00129">
    <property type="entry name" value="MnmG_GidA"/>
    <property type="match status" value="1"/>
</dbReference>
<dbReference type="InterPro" id="IPR036188">
    <property type="entry name" value="FAD/NAD-bd_sf"/>
</dbReference>
<dbReference type="InterPro" id="IPR049312">
    <property type="entry name" value="GIDA_C_N"/>
</dbReference>
<dbReference type="InterPro" id="IPR004416">
    <property type="entry name" value="MnmG"/>
</dbReference>
<dbReference type="InterPro" id="IPR002218">
    <property type="entry name" value="MnmG-rel"/>
</dbReference>
<dbReference type="InterPro" id="IPR020595">
    <property type="entry name" value="MnmG-rel_CS"/>
</dbReference>
<dbReference type="InterPro" id="IPR026904">
    <property type="entry name" value="MnmG_C"/>
</dbReference>
<dbReference type="InterPro" id="IPR047001">
    <property type="entry name" value="MnmG_C_subdom"/>
</dbReference>
<dbReference type="InterPro" id="IPR044920">
    <property type="entry name" value="MnmG_C_subdom_sf"/>
</dbReference>
<dbReference type="InterPro" id="IPR040131">
    <property type="entry name" value="MnmG_N"/>
</dbReference>
<dbReference type="NCBIfam" id="TIGR00136">
    <property type="entry name" value="mnmG_gidA"/>
    <property type="match status" value="1"/>
</dbReference>
<dbReference type="PANTHER" id="PTHR11806">
    <property type="entry name" value="GLUCOSE INHIBITED DIVISION PROTEIN A"/>
    <property type="match status" value="1"/>
</dbReference>
<dbReference type="PANTHER" id="PTHR11806:SF0">
    <property type="entry name" value="PROTEIN MTO1 HOMOLOG, MITOCHONDRIAL"/>
    <property type="match status" value="1"/>
</dbReference>
<dbReference type="Pfam" id="PF01134">
    <property type="entry name" value="GIDA"/>
    <property type="match status" value="1"/>
</dbReference>
<dbReference type="Pfam" id="PF21680">
    <property type="entry name" value="GIDA_C_1st"/>
    <property type="match status" value="1"/>
</dbReference>
<dbReference type="Pfam" id="PF13932">
    <property type="entry name" value="SAM_GIDA_C"/>
    <property type="match status" value="1"/>
</dbReference>
<dbReference type="PRINTS" id="PR00411">
    <property type="entry name" value="PNDRDTASEI"/>
</dbReference>
<dbReference type="SMART" id="SM01228">
    <property type="entry name" value="GIDA_assoc_3"/>
    <property type="match status" value="1"/>
</dbReference>
<dbReference type="SUPFAM" id="SSF51905">
    <property type="entry name" value="FAD/NAD(P)-binding domain"/>
    <property type="match status" value="1"/>
</dbReference>
<dbReference type="PROSITE" id="PS01280">
    <property type="entry name" value="GIDA_1"/>
    <property type="match status" value="1"/>
</dbReference>
<dbReference type="PROSITE" id="PS01281">
    <property type="entry name" value="GIDA_2"/>
    <property type="match status" value="1"/>
</dbReference>